<keyword id="KW-0903">Direct protein sequencing</keyword>
<keyword id="KW-1015">Disulfide bond</keyword>
<keyword id="KW-0325">Glycoprotein</keyword>
<keyword id="KW-0481">Metalloenzyme inhibitor</keyword>
<keyword id="KW-0483">Metalloprotease inhibitor</keyword>
<keyword id="KW-0646">Protease inhibitor</keyword>
<keyword id="KW-0677">Repeat</keyword>
<keyword id="KW-0964">Secreted</keyword>
<keyword id="KW-0732">Signal</keyword>
<protein>
    <recommendedName>
        <fullName>Antihemorrhagic factor HSF</fullName>
    </recommendedName>
    <alternativeName>
        <fullName>Habu serum factor</fullName>
    </alternativeName>
    <alternativeName>
        <fullName>Metalloproteinase inhibitor</fullName>
    </alternativeName>
</protein>
<accession>P29695</accession>
<accession>Q98TC1</accession>
<evidence type="ECO:0000255" key="1"/>
<evidence type="ECO:0000255" key="2">
    <source>
        <dbReference type="PROSITE-ProRule" id="PRU00861"/>
    </source>
</evidence>
<evidence type="ECO:0000269" key="3">
    <source>
    </source>
</evidence>
<evidence type="ECO:0000269" key="4">
    <source>
    </source>
</evidence>
<evidence type="ECO:0000269" key="5">
    <source>
    </source>
</evidence>
<evidence type="ECO:0000305" key="6"/>
<feature type="signal peptide" evidence="3 4 5">
    <location>
        <begin position="1"/>
        <end position="19"/>
    </location>
</feature>
<feature type="chain" id="PRO_0000138376" description="Antihemorrhagic factor HSF">
    <location>
        <begin position="20"/>
        <end position="342"/>
    </location>
</feature>
<feature type="domain" description="Cystatin fetuin-A-type 1" evidence="2">
    <location>
        <begin position="22"/>
        <end position="130"/>
    </location>
</feature>
<feature type="domain" description="Cystatin fetuin-A-type 2" evidence="2">
    <location>
        <begin position="141"/>
        <end position="254"/>
    </location>
</feature>
<feature type="region of interest" description="Indispensable for metalloproteinase inhibition">
    <location>
        <begin position="24"/>
        <end position="108"/>
    </location>
</feature>
<feature type="short sequence motif" description="Cell attachment site">
    <location>
        <begin position="23"/>
        <end position="25"/>
    </location>
</feature>
<feature type="site" description="Cleavage; by trypsin" evidence="1">
    <location>
        <begin position="140"/>
        <end position="141"/>
    </location>
</feature>
<feature type="glycosylation site" description="N-linked (GlcNAc...) asparagine" evidence="3 5">
    <location>
        <position position="142"/>
    </location>
</feature>
<feature type="glycosylation site" description="N-linked (GlcNAc...) asparagine" evidence="3">
    <location>
        <position position="204"/>
    </location>
</feature>
<feature type="glycosylation site" description="N-linked (GlcNAc...) asparagine" evidence="3">
    <location>
        <position position="282"/>
    </location>
</feature>
<feature type="disulfide bond" evidence="2 5">
    <location>
        <begin position="28"/>
        <end position="332"/>
    </location>
</feature>
<feature type="disulfide bond" evidence="2">
    <location>
        <begin position="85"/>
        <end position="96"/>
    </location>
</feature>
<feature type="disulfide bond" evidence="2">
    <location>
        <begin position="110"/>
        <end position="129"/>
    </location>
</feature>
<feature type="disulfide bond" evidence="2">
    <location>
        <begin position="143"/>
        <end position="146"/>
    </location>
</feature>
<feature type="disulfide bond" evidence="2">
    <location>
        <begin position="205"/>
        <end position="217"/>
    </location>
</feature>
<feature type="disulfide bond" evidence="2">
    <location>
        <begin position="230"/>
        <end position="253"/>
    </location>
</feature>
<feature type="sequence conflict" description="In Ref. 2; AA sequence." evidence="6" ref="2">
    <original>S</original>
    <variation>D</variation>
    <location>
        <position position="20"/>
    </location>
</feature>
<feature type="sequence conflict" description="In Ref. 2; AA sequence." evidence="6" ref="2">
    <original>N</original>
    <variation>D</variation>
    <location>
        <position position="252"/>
    </location>
</feature>
<feature type="sequence conflict" description="In Ref. 2; AA sequence." evidence="6" ref="2">
    <original>D</original>
    <variation>N</variation>
    <location>
        <position position="260"/>
    </location>
</feature>
<feature type="sequence conflict" description="In Ref. 2; AA sequence." evidence="6" ref="2">
    <original>S</original>
    <variation>E</variation>
    <location>
        <position position="301"/>
    </location>
</feature>
<feature type="sequence conflict" description="In Ref. 2; AA sequence." evidence="6" ref="2">
    <original>K</original>
    <variation>E</variation>
    <location>
        <position position="340"/>
    </location>
</feature>
<sequence length="342" mass="38916">MNSLVALVLLGQIIGSTLSSQVRGDLECDDKEAKNWADDAVRYINEHKLHGHKQALNVIKNICVVPWNGDLVAVFLELNLLETECHVLDPTPVEKCTVRQQHNHAVEMDCDAKIMFNVETFKRDVFVKCHSTPDSVENVRRNCSKCPILLPPNNPHVVDSVEYVLNKHNEKLSGHIYEVLEISRGQHKYEPEAYYLEFVIVEINCTAQEAHDDHHQCHPYTAGEDHIAFCRSTVFRSHASLEKPKDEKFESNCVILDVKDGHAHSHLIQQHIEKNSISPEHNITILNFVHPDDHTSTSHESHEHVAEVPVVFVKKELPTDISDHHTTPVKGCPGKVHHFKLY</sequence>
<reference key="1">
    <citation type="journal article" date="2005" name="Toxicon">
        <title>Properties and cDNA cloning of an antihemorrhagic factor (HSF) purified from the serum of Trimeresurus flavoviridis.</title>
        <authorList>
            <person name="Deshimaru M."/>
            <person name="Tanaka C."/>
            <person name="Fujino K."/>
            <person name="Aoki N."/>
            <person name="Terada S."/>
            <person name="Hattori S."/>
            <person name="Ohno M."/>
        </authorList>
    </citation>
    <scope>NUCLEOTIDE SEQUENCE [MRNA]</scope>
    <scope>PROTEIN SEQUENCE OF 20-67</scope>
    <scope>FUNCTION</scope>
    <scope>BINDING TO BREVILYSIN H6</scope>
    <scope>MASS SPECTROMETRY</scope>
    <source>
        <tissue>Liver</tissue>
        <tissue>Serum</tissue>
    </source>
</reference>
<reference key="2">
    <citation type="journal article" date="1992" name="J. Biochem.">
        <title>Primary structure of the antihemorrhagic factor in serum of the Japanese Habu: a snake venom metalloproteinase inhibitor with a double-headed cystatin domain.</title>
        <authorList>
            <person name="Yamakawa Y."/>
            <person name="Omori-Satoh T."/>
        </authorList>
    </citation>
    <scope>PROTEIN SEQUENCE OF 20-342</scope>
    <scope>GLYCOSYLATION AT ASN-142; ASN-204 AND ASN-282</scope>
    <source>
        <tissue>Serum</tissue>
    </source>
</reference>
<reference key="3">
    <citation type="journal article" date="2007" name="Toxicon">
        <title>Active fragments of the antihemorrhagic protein HSF from serum of habu (Trimeresurus flavoviridis).</title>
        <authorList>
            <person name="Aoki N."/>
            <person name="Deshimaru M."/>
            <person name="Terada S."/>
        </authorList>
    </citation>
    <scope>PROTEIN SEQUENCE OF 20-54; 61-81; 123-142 AND 331-342</scope>
    <scope>GLYCOSYLATION AT ASN-142</scope>
    <scope>DISULFIDE BOND</scope>
    <scope>REGION</scope>
    <scope>3D-STRUCTURE MODELING</scope>
    <source>
        <tissue>Serum</tissue>
    </source>
</reference>
<organism>
    <name type="scientific">Protobothrops flavoviridis</name>
    <name type="common">Habu</name>
    <name type="synonym">Trimeresurus flavoviridis</name>
    <dbReference type="NCBI Taxonomy" id="88087"/>
    <lineage>
        <taxon>Eukaryota</taxon>
        <taxon>Metazoa</taxon>
        <taxon>Chordata</taxon>
        <taxon>Craniata</taxon>
        <taxon>Vertebrata</taxon>
        <taxon>Euteleostomi</taxon>
        <taxon>Lepidosauria</taxon>
        <taxon>Squamata</taxon>
        <taxon>Bifurcata</taxon>
        <taxon>Unidentata</taxon>
        <taxon>Episquamata</taxon>
        <taxon>Toxicofera</taxon>
        <taxon>Serpentes</taxon>
        <taxon>Colubroidea</taxon>
        <taxon>Viperidae</taxon>
        <taxon>Crotalinae</taxon>
        <taxon>Protobothrops</taxon>
    </lineage>
</organism>
<dbReference type="EMBL" id="AB058635">
    <property type="protein sequence ID" value="BAB39858.1"/>
    <property type="molecule type" value="mRNA"/>
</dbReference>
<dbReference type="PIR" id="JX0240">
    <property type="entry name" value="JX0240"/>
</dbReference>
<dbReference type="SMR" id="P29695"/>
<dbReference type="MEROPS" id="I25.026"/>
<dbReference type="MEROPS" id="I25.042"/>
<dbReference type="iPTMnet" id="P29695"/>
<dbReference type="GO" id="GO:0072562">
    <property type="term" value="C:blood microparticle"/>
    <property type="evidence" value="ECO:0007669"/>
    <property type="project" value="TreeGrafter"/>
</dbReference>
<dbReference type="GO" id="GO:0031012">
    <property type="term" value="C:extracellular matrix"/>
    <property type="evidence" value="ECO:0007669"/>
    <property type="project" value="TreeGrafter"/>
</dbReference>
<dbReference type="GO" id="GO:0004869">
    <property type="term" value="F:cysteine-type endopeptidase inhibitor activity"/>
    <property type="evidence" value="ECO:0007669"/>
    <property type="project" value="InterPro"/>
</dbReference>
<dbReference type="CDD" id="cd00042">
    <property type="entry name" value="CY"/>
    <property type="match status" value="2"/>
</dbReference>
<dbReference type="FunFam" id="3.10.450.10:FF:000002">
    <property type="entry name" value="Kininogen 1"/>
    <property type="match status" value="1"/>
</dbReference>
<dbReference type="Gene3D" id="3.10.450.10">
    <property type="match status" value="2"/>
</dbReference>
<dbReference type="InterPro" id="IPR000010">
    <property type="entry name" value="Cystatin_dom"/>
</dbReference>
<dbReference type="InterPro" id="IPR025760">
    <property type="entry name" value="Cystatin_Fetuin_A"/>
</dbReference>
<dbReference type="InterPro" id="IPR046350">
    <property type="entry name" value="Cystatin_sf"/>
</dbReference>
<dbReference type="InterPro" id="IPR050735">
    <property type="entry name" value="Kininogen_Fetuin_HRG"/>
</dbReference>
<dbReference type="InterPro" id="IPR001363">
    <property type="entry name" value="Prot_inh_fetuin_CS"/>
</dbReference>
<dbReference type="PANTHER" id="PTHR13814:SF6">
    <property type="entry name" value="ALPHA-2-HS-GLYCOPROTEIN"/>
    <property type="match status" value="1"/>
</dbReference>
<dbReference type="PANTHER" id="PTHR13814">
    <property type="entry name" value="FETUIN"/>
    <property type="match status" value="1"/>
</dbReference>
<dbReference type="Pfam" id="PF00031">
    <property type="entry name" value="Cystatin"/>
    <property type="match status" value="1"/>
</dbReference>
<dbReference type="SMART" id="SM00043">
    <property type="entry name" value="CY"/>
    <property type="match status" value="2"/>
</dbReference>
<dbReference type="SUPFAM" id="SSF54403">
    <property type="entry name" value="Cystatin/monellin"/>
    <property type="match status" value="2"/>
</dbReference>
<dbReference type="PROSITE" id="PS51529">
    <property type="entry name" value="CYSTATIN_FETUIN_A"/>
    <property type="match status" value="2"/>
</dbReference>
<dbReference type="PROSITE" id="PS01254">
    <property type="entry name" value="FETUIN_1"/>
    <property type="match status" value="1"/>
</dbReference>
<dbReference type="PROSITE" id="PS01255">
    <property type="entry name" value="FETUIN_2"/>
    <property type="match status" value="1"/>
</dbReference>
<name>FETAF_PROFL</name>
<comment type="function">
    <text evidence="4">Inhibits hemorrhagic and proteolytic activities of metalloproteinases (HR1A, HR1B, HR2a, HR2b and H2 proteinase from T.flavodidis and brevilysins H3, H4, H6 and L4 from A.halys brevicaudus). Has no effect on brevilysins H2. Has no effect on papain and cathepsin-B.</text>
</comment>
<comment type="subcellular location">
    <subcellularLocation>
        <location>Secreted</location>
    </subcellularLocation>
</comment>
<comment type="tissue specificity">
    <text>Expressed by the liver.</text>
</comment>
<comment type="PTM">
    <text>Cys-63 may exist in a mixed disulfide form with a thiol compound such as glutathione.</text>
</comment>
<comment type="mass spectrometry" mass="47810.0" method="MALDI" evidence="4"/>
<comment type="miscellaneous">
    <text>Is highly stable to extreme pH and heating, stability that may be conferred by the disulfide bond between Cys-28 and Cys-332.</text>
</comment>
<comment type="similarity">
    <text evidence="2">Belongs to the fetuin family.</text>
</comment>
<proteinExistence type="evidence at protein level"/>